<reference key="1">
    <citation type="journal article" date="2005" name="PLoS Biol.">
        <title>The genome sequence of Rickettsia felis identifies the first putative conjugative plasmid in an obligate intracellular parasite.</title>
        <authorList>
            <person name="Ogata H."/>
            <person name="Renesto P."/>
            <person name="Audic S."/>
            <person name="Robert C."/>
            <person name="Blanc G."/>
            <person name="Fournier P.-E."/>
            <person name="Parinello H."/>
            <person name="Claverie J.-M."/>
            <person name="Raoult D."/>
        </authorList>
    </citation>
    <scope>NUCLEOTIDE SEQUENCE [LARGE SCALE GENOMIC DNA]</scope>
    <source>
        <strain>ATCC VR-1525 / URRWXCal2</strain>
    </source>
</reference>
<gene>
    <name evidence="1" type="primary">lpxC</name>
    <name type="ordered locus">RF_1028</name>
</gene>
<dbReference type="EC" id="3.5.1.108" evidence="1"/>
<dbReference type="EMBL" id="CP000053">
    <property type="protein sequence ID" value="AAY61879.1"/>
    <property type="molecule type" value="Genomic_DNA"/>
</dbReference>
<dbReference type="SMR" id="Q4UKP8"/>
<dbReference type="STRING" id="315456.RF_1028"/>
<dbReference type="KEGG" id="rfe:RF_1028"/>
<dbReference type="eggNOG" id="COG0774">
    <property type="taxonomic scope" value="Bacteria"/>
</dbReference>
<dbReference type="HOGENOM" id="CLU_046528_1_0_5"/>
<dbReference type="OrthoDB" id="9802746at2"/>
<dbReference type="UniPathway" id="UPA00359">
    <property type="reaction ID" value="UER00478"/>
</dbReference>
<dbReference type="Proteomes" id="UP000008548">
    <property type="component" value="Chromosome"/>
</dbReference>
<dbReference type="GO" id="GO:0016020">
    <property type="term" value="C:membrane"/>
    <property type="evidence" value="ECO:0007669"/>
    <property type="project" value="GOC"/>
</dbReference>
<dbReference type="GO" id="GO:0046872">
    <property type="term" value="F:metal ion binding"/>
    <property type="evidence" value="ECO:0007669"/>
    <property type="project" value="UniProtKB-KW"/>
</dbReference>
<dbReference type="GO" id="GO:0103117">
    <property type="term" value="F:UDP-3-O-acyl-N-acetylglucosamine deacetylase activity"/>
    <property type="evidence" value="ECO:0007669"/>
    <property type="project" value="UniProtKB-UniRule"/>
</dbReference>
<dbReference type="GO" id="GO:0009245">
    <property type="term" value="P:lipid A biosynthetic process"/>
    <property type="evidence" value="ECO:0007669"/>
    <property type="project" value="UniProtKB-UniRule"/>
</dbReference>
<dbReference type="Gene3D" id="3.30.230.20">
    <property type="entry name" value="lpxc deacetylase, domain 1"/>
    <property type="match status" value="1"/>
</dbReference>
<dbReference type="Gene3D" id="3.30.1700.10">
    <property type="entry name" value="lpxc deacetylase, domain 2"/>
    <property type="match status" value="1"/>
</dbReference>
<dbReference type="HAMAP" id="MF_00388">
    <property type="entry name" value="LpxC"/>
    <property type="match status" value="1"/>
</dbReference>
<dbReference type="InterPro" id="IPR020568">
    <property type="entry name" value="Ribosomal_Su5_D2-typ_SF"/>
</dbReference>
<dbReference type="InterPro" id="IPR004463">
    <property type="entry name" value="UDP-acyl_GlcNac_deAcase"/>
</dbReference>
<dbReference type="InterPro" id="IPR011334">
    <property type="entry name" value="UDP-acyl_GlcNac_deAcase_C"/>
</dbReference>
<dbReference type="InterPro" id="IPR015870">
    <property type="entry name" value="UDP-acyl_N-AcGlcN_deAcase_N"/>
</dbReference>
<dbReference type="NCBIfam" id="TIGR00325">
    <property type="entry name" value="lpxC"/>
    <property type="match status" value="1"/>
</dbReference>
<dbReference type="PANTHER" id="PTHR33694">
    <property type="entry name" value="UDP-3-O-ACYL-N-ACETYLGLUCOSAMINE DEACETYLASE 1, MITOCHONDRIAL-RELATED"/>
    <property type="match status" value="1"/>
</dbReference>
<dbReference type="PANTHER" id="PTHR33694:SF1">
    <property type="entry name" value="UDP-3-O-ACYL-N-ACETYLGLUCOSAMINE DEACETYLASE 1, MITOCHONDRIAL-RELATED"/>
    <property type="match status" value="1"/>
</dbReference>
<dbReference type="Pfam" id="PF03331">
    <property type="entry name" value="LpxC"/>
    <property type="match status" value="1"/>
</dbReference>
<dbReference type="SUPFAM" id="SSF54211">
    <property type="entry name" value="Ribosomal protein S5 domain 2-like"/>
    <property type="match status" value="2"/>
</dbReference>
<organism>
    <name type="scientific">Rickettsia felis (strain ATCC VR-1525 / URRWXCal2)</name>
    <name type="common">Rickettsia azadi</name>
    <dbReference type="NCBI Taxonomy" id="315456"/>
    <lineage>
        <taxon>Bacteria</taxon>
        <taxon>Pseudomonadati</taxon>
        <taxon>Pseudomonadota</taxon>
        <taxon>Alphaproteobacteria</taxon>
        <taxon>Rickettsiales</taxon>
        <taxon>Rickettsiaceae</taxon>
        <taxon>Rickettsieae</taxon>
        <taxon>Rickettsia</taxon>
        <taxon>spotted fever group</taxon>
    </lineage>
</organism>
<evidence type="ECO:0000255" key="1">
    <source>
        <dbReference type="HAMAP-Rule" id="MF_00388"/>
    </source>
</evidence>
<proteinExistence type="inferred from homology"/>
<feature type="chain" id="PRO_0000191950" description="UDP-3-O-acyl-N-acetylglucosamine deacetylase">
    <location>
        <begin position="1"/>
        <end position="288"/>
    </location>
</feature>
<feature type="active site" description="Proton donor" evidence="1">
    <location>
        <position position="263"/>
    </location>
</feature>
<feature type="binding site" evidence="1">
    <location>
        <position position="79"/>
    </location>
    <ligand>
        <name>Zn(2+)</name>
        <dbReference type="ChEBI" id="CHEBI:29105"/>
    </ligand>
</feature>
<feature type="binding site" evidence="1">
    <location>
        <position position="236"/>
    </location>
    <ligand>
        <name>Zn(2+)</name>
        <dbReference type="ChEBI" id="CHEBI:29105"/>
    </ligand>
</feature>
<feature type="binding site" evidence="1">
    <location>
        <position position="240"/>
    </location>
    <ligand>
        <name>Zn(2+)</name>
        <dbReference type="ChEBI" id="CHEBI:29105"/>
    </ligand>
</feature>
<protein>
    <recommendedName>
        <fullName evidence="1">UDP-3-O-acyl-N-acetylglucosamine deacetylase</fullName>
        <shortName evidence="1">UDP-3-O-acyl-GlcNAc deacetylase</shortName>
        <ecNumber evidence="1">3.5.1.108</ecNumber>
    </recommendedName>
    <alternativeName>
        <fullName evidence="1">UDP-3-O-[R-3-hydroxymyristoyl]-N-acetylglucosamine deacetylase</fullName>
    </alternativeName>
</protein>
<name>LPXC_RICFE</name>
<accession>Q4UKP8</accession>
<keyword id="KW-0378">Hydrolase</keyword>
<keyword id="KW-0441">Lipid A biosynthesis</keyword>
<keyword id="KW-0444">Lipid biosynthesis</keyword>
<keyword id="KW-0443">Lipid metabolism</keyword>
<keyword id="KW-0479">Metal-binding</keyword>
<keyword id="KW-0862">Zinc</keyword>
<sequence>MQQSTLLKPVSCYGIGVHSGKRTQLTIEPAKENTGIIFIRTDISSENNYIEASYFNVSDTLLSTTISNDHKVQISTIEHLMAALWGCSIDNAIIKIDGPEVPIMDGSSKPFVFMIECAGKKLQNAPKKYLKILKDIKVVHKDCELYCTPYDHMTVDLTIDFASKAIGRQNLTFSKQESFNQNIADARTFGFTKELDYLQSKGLAQGASFENAIGIDEQDKILNPNGLRYEDEFVRHKLLDLFGDLYTSGTSVVSSIKGYKTSHALNNELLHRIFSDTTSYKFVTNSEL</sequence>
<comment type="function">
    <text evidence="1">Catalyzes the hydrolysis of UDP-3-O-myristoyl-N-acetylglucosamine to form UDP-3-O-myristoylglucosamine and acetate, the committed step in lipid A biosynthesis.</text>
</comment>
<comment type="catalytic activity">
    <reaction evidence="1">
        <text>a UDP-3-O-[(3R)-3-hydroxyacyl]-N-acetyl-alpha-D-glucosamine + H2O = a UDP-3-O-[(3R)-3-hydroxyacyl]-alpha-D-glucosamine + acetate</text>
        <dbReference type="Rhea" id="RHEA:67816"/>
        <dbReference type="ChEBI" id="CHEBI:15377"/>
        <dbReference type="ChEBI" id="CHEBI:30089"/>
        <dbReference type="ChEBI" id="CHEBI:137740"/>
        <dbReference type="ChEBI" id="CHEBI:173225"/>
        <dbReference type="EC" id="3.5.1.108"/>
    </reaction>
</comment>
<comment type="cofactor">
    <cofactor evidence="1">
        <name>Zn(2+)</name>
        <dbReference type="ChEBI" id="CHEBI:29105"/>
    </cofactor>
</comment>
<comment type="pathway">
    <text evidence="1">Glycolipid biosynthesis; lipid IV(A) biosynthesis; lipid IV(A) from (3R)-3-hydroxytetradecanoyl-[acyl-carrier-protein] and UDP-N-acetyl-alpha-D-glucosamine: step 2/6.</text>
</comment>
<comment type="similarity">
    <text evidence="1">Belongs to the LpxC family.</text>
</comment>